<keyword id="KW-0002">3D-structure</keyword>
<keyword id="KW-0998">Cell outer membrane</keyword>
<keyword id="KW-0281">Fimbrium</keyword>
<keyword id="KW-0449">Lipoprotein</keyword>
<keyword id="KW-0472">Membrane</keyword>
<keyword id="KW-0564">Palmitate</keyword>
<keyword id="KW-0732">Signal</keyword>
<dbReference type="EMBL" id="AAXF02000054">
    <property type="protein sequence ID" value="EDO09124.1"/>
    <property type="molecule type" value="Genomic_DNA"/>
</dbReference>
<dbReference type="RefSeq" id="WP_004301586.1">
    <property type="nucleotide sequence ID" value="NZ_DS264584.1"/>
</dbReference>
<dbReference type="PDB" id="4EPS">
    <property type="method" value="X-ray"/>
    <property type="resolution" value="1.85 A"/>
    <property type="chains" value="A=26-534"/>
</dbReference>
<dbReference type="PDBsum" id="4EPS"/>
<dbReference type="SMR" id="A7M4E1"/>
<dbReference type="eggNOG" id="ENOG5033AY2">
    <property type="taxonomic scope" value="Bacteria"/>
</dbReference>
<dbReference type="HOGENOM" id="CLU_033781_0_0_10"/>
<dbReference type="EvolutionaryTrace" id="A7M4E1"/>
<dbReference type="Proteomes" id="UP000005475">
    <property type="component" value="Unassembled WGS sequence"/>
</dbReference>
<dbReference type="GO" id="GO:0009279">
    <property type="term" value="C:cell outer membrane"/>
    <property type="evidence" value="ECO:0007669"/>
    <property type="project" value="UniProtKB-SubCell"/>
</dbReference>
<dbReference type="GO" id="GO:0009289">
    <property type="term" value="C:pilus"/>
    <property type="evidence" value="ECO:0007669"/>
    <property type="project" value="UniProtKB-SubCell"/>
</dbReference>
<dbReference type="CDD" id="cd13120">
    <property type="entry name" value="BF2867_like_N"/>
    <property type="match status" value="1"/>
</dbReference>
<dbReference type="Gene3D" id="2.60.40.3570">
    <property type="match status" value="1"/>
</dbReference>
<dbReference type="Gene3D" id="2.60.40.2620">
    <property type="entry name" value="Fimbrillin-like"/>
    <property type="match status" value="1"/>
</dbReference>
<dbReference type="InterPro" id="IPR025049">
    <property type="entry name" value="Mfa-like_1"/>
</dbReference>
<dbReference type="InterPro" id="IPR042278">
    <property type="entry name" value="Mfa-like_1_N"/>
</dbReference>
<dbReference type="Pfam" id="PF13149">
    <property type="entry name" value="Mfa_like_1"/>
    <property type="match status" value="1"/>
</dbReference>
<dbReference type="PROSITE" id="PS51257">
    <property type="entry name" value="PROKAR_LIPOPROTEIN"/>
    <property type="match status" value="1"/>
</dbReference>
<organism>
    <name type="scientific">Bacteroides ovatus (strain ATCC 8483 / DSM 1896 / JCM 5824 / BCRC 10623 / CCUG 4943 / NCTC 11153)</name>
    <dbReference type="NCBI Taxonomy" id="411476"/>
    <lineage>
        <taxon>Bacteria</taxon>
        <taxon>Pseudomonadati</taxon>
        <taxon>Bacteroidota</taxon>
        <taxon>Bacteroidia</taxon>
        <taxon>Bacteroidales</taxon>
        <taxon>Bacteroidaceae</taxon>
        <taxon>Bacteroides</taxon>
    </lineage>
</organism>
<accession>A7M4E1</accession>
<proteinExistence type="evidence at protein level"/>
<protein>
    <recommendedName>
        <fullName>Putative fimbrium tip subunit Fim1C</fullName>
    </recommendedName>
</protein>
<sequence>MKQYKLMQVALLAILLFGWAGCSQNEEEVPGNVRNGIVLNVTDTGIISNEPSTRTEDTGFVTTFTQGDQIGLFAVKDGAILDEINNMPFTFNGSSWSGKPILYDDRLVGVNFYAYYPYQSEMTGKTDLIGDDFFAPLAAGWELTTEQSDQKAYAKQDLMTSNATALIGENGNYSLSFQLTHRMSLVVVKLPSTRYIFTDAEGVAMPEETPYVAMSVDVAFYLDNVEEGTKISPYYDAKKDEYRLLRKPSSENQIIGHYNDKQCTLDTAEKMKEGKYKRFVVDGGYKEVTHHLQVGDYYYADGSVVSGNEAEPAKDNCIGIVCWVGNPMPSVLYKDVAGTPYTATNDALLRSHPNCVHGLVMSLYTETGKFSPALTQSIHDWFMTTSFTSSYVSVTGYYDANENNKNKPLRFLGYNNSEVLDLYYDTFKTDFECFQYQDDCESSFPSPSITTGWYVPSSGELVALQDKDNSLESKLNTKLIKVSDKTMDISATYWSSTERNNKNMYIVTYSKTAGSAGTGGVKTNTYTYRFFLGF</sequence>
<comment type="function">
    <text evidence="4">Probably a component of the fimbrium tip. Fimbriae are filamentous appendages on the cell surface that mediate cell adhesion and biofilm formation.</text>
</comment>
<comment type="subunit">
    <text evidence="4">May be part of the fimbrial tip.</text>
</comment>
<comment type="subcellular location">
    <subcellularLocation>
        <location evidence="4">Fimbrium</location>
    </subcellularLocation>
    <subcellularLocation>
        <location evidence="3">Cell outer membrane</location>
    </subcellularLocation>
    <text evidence="4">Probably synthesized as a palmitoylated precursor. Efficient export to the outer membrane and integration into fimbriae requires lipidation and subsequent proteolytic removal of the lipidated propeptide. Probably part of the fimbrium tip.</text>
</comment>
<comment type="similarity">
    <text evidence="3">Belongs to the bacteroidetes fimbrillin superfamily. Mfa-like family.</text>
</comment>
<gene>
    <name evidence="5" type="ORF">BACOVA_04982</name>
</gene>
<evidence type="ECO:0000255" key="1"/>
<evidence type="ECO:0000255" key="2">
    <source>
        <dbReference type="PROSITE-ProRule" id="PRU00303"/>
    </source>
</evidence>
<evidence type="ECO:0000305" key="3"/>
<evidence type="ECO:0000305" key="4">
    <source>
    </source>
</evidence>
<evidence type="ECO:0000312" key="5">
    <source>
        <dbReference type="EMBL" id="EDO09124.1"/>
    </source>
</evidence>
<evidence type="ECO:0007829" key="6">
    <source>
        <dbReference type="PDB" id="4EPS"/>
    </source>
</evidence>
<feature type="signal peptide" evidence="2">
    <location>
        <begin position="1"/>
        <end position="21"/>
    </location>
</feature>
<feature type="propeptide" id="PRO_0000436735" evidence="1">
    <location>
        <begin position="22"/>
        <end position="54"/>
    </location>
</feature>
<feature type="chain" id="PRO_5002712130" description="Putative fimbrium tip subunit Fim1C">
    <location>
        <begin position="55"/>
        <end position="534"/>
    </location>
</feature>
<feature type="lipid moiety-binding region" description="N-palmitoyl cysteine" evidence="2">
    <location>
        <position position="22"/>
    </location>
</feature>
<feature type="lipid moiety-binding region" description="S-diacylglycerol cysteine" evidence="2">
    <location>
        <position position="22"/>
    </location>
</feature>
<feature type="strand" evidence="6">
    <location>
        <begin position="38"/>
        <end position="43"/>
    </location>
</feature>
<feature type="strand" evidence="6">
    <location>
        <begin position="46"/>
        <end position="48"/>
    </location>
</feature>
<feature type="strand" evidence="6">
    <location>
        <begin position="69"/>
        <end position="76"/>
    </location>
</feature>
<feature type="strand" evidence="6">
    <location>
        <begin position="84"/>
        <end position="91"/>
    </location>
</feature>
<feature type="strand" evidence="6">
    <location>
        <begin position="93"/>
        <end position="99"/>
    </location>
</feature>
<feature type="helix" evidence="6">
    <location>
        <begin position="105"/>
        <end position="107"/>
    </location>
</feature>
<feature type="strand" evidence="6">
    <location>
        <begin position="111"/>
        <end position="117"/>
    </location>
</feature>
<feature type="strand" evidence="6">
    <location>
        <begin position="128"/>
        <end position="131"/>
    </location>
</feature>
<feature type="helix" evidence="6">
    <location>
        <begin position="135"/>
        <end position="139"/>
    </location>
</feature>
<feature type="helix" evidence="6">
    <location>
        <begin position="150"/>
        <end position="154"/>
    </location>
</feature>
<feature type="strand" evidence="6">
    <location>
        <begin position="167"/>
        <end position="169"/>
    </location>
</feature>
<feature type="strand" evidence="6">
    <location>
        <begin position="172"/>
        <end position="181"/>
    </location>
</feature>
<feature type="strand" evidence="6">
    <location>
        <begin position="183"/>
        <end position="189"/>
    </location>
</feature>
<feature type="strand" evidence="6">
    <location>
        <begin position="192"/>
        <end position="198"/>
    </location>
</feature>
<feature type="strand" evidence="6">
    <location>
        <begin position="211"/>
        <end position="214"/>
    </location>
</feature>
<feature type="strand" evidence="6">
    <location>
        <begin position="219"/>
        <end position="224"/>
    </location>
</feature>
<feature type="helix" evidence="6">
    <location>
        <begin position="227"/>
        <end position="229"/>
    </location>
</feature>
<feature type="strand" evidence="6">
    <location>
        <begin position="230"/>
        <end position="232"/>
    </location>
</feature>
<feature type="strand" evidence="6">
    <location>
        <begin position="234"/>
        <end position="236"/>
    </location>
</feature>
<feature type="turn" evidence="6">
    <location>
        <begin position="237"/>
        <end position="240"/>
    </location>
</feature>
<feature type="strand" evidence="6">
    <location>
        <begin position="241"/>
        <end position="246"/>
    </location>
</feature>
<feature type="strand" evidence="6">
    <location>
        <begin position="253"/>
        <end position="258"/>
    </location>
</feature>
<feature type="strand" evidence="6">
    <location>
        <begin position="261"/>
        <end position="266"/>
    </location>
</feature>
<feature type="strand" evidence="6">
    <location>
        <begin position="275"/>
        <end position="280"/>
    </location>
</feature>
<feature type="strand" evidence="6">
    <location>
        <begin position="285"/>
        <end position="291"/>
    </location>
</feature>
<feature type="strand" evidence="6">
    <location>
        <begin position="297"/>
        <end position="299"/>
    </location>
</feature>
<feature type="strand" evidence="6">
    <location>
        <begin position="317"/>
        <end position="325"/>
    </location>
</feature>
<feature type="helix" evidence="6">
    <location>
        <begin position="329"/>
        <end position="332"/>
    </location>
</feature>
<feature type="turn" evidence="6">
    <location>
        <begin position="333"/>
        <end position="335"/>
    </location>
</feature>
<feature type="helix" evidence="6">
    <location>
        <begin position="343"/>
        <end position="345"/>
    </location>
</feature>
<feature type="helix" evidence="6">
    <location>
        <begin position="347"/>
        <end position="351"/>
    </location>
</feature>
<feature type="strand" evidence="6">
    <location>
        <begin position="357"/>
        <end position="363"/>
    </location>
</feature>
<feature type="strand" evidence="6">
    <location>
        <begin position="366"/>
        <end position="368"/>
    </location>
</feature>
<feature type="helix" evidence="6">
    <location>
        <begin position="378"/>
        <end position="383"/>
    </location>
</feature>
<feature type="turn" evidence="6">
    <location>
        <begin position="386"/>
        <end position="390"/>
    </location>
</feature>
<feature type="strand" evidence="6">
    <location>
        <begin position="394"/>
        <end position="398"/>
    </location>
</feature>
<feature type="strand" evidence="6">
    <location>
        <begin position="400"/>
        <end position="402"/>
    </location>
</feature>
<feature type="turn" evidence="6">
    <location>
        <begin position="404"/>
        <end position="406"/>
    </location>
</feature>
<feature type="helix" evidence="6">
    <location>
        <begin position="407"/>
        <end position="409"/>
    </location>
</feature>
<feature type="helix" evidence="6">
    <location>
        <begin position="413"/>
        <end position="427"/>
    </location>
</feature>
<feature type="helix" evidence="6">
    <location>
        <begin position="432"/>
        <end position="443"/>
    </location>
</feature>
<feature type="helix" evidence="6">
    <location>
        <begin position="458"/>
        <end position="462"/>
    </location>
</feature>
<feature type="helix" evidence="6">
    <location>
        <begin position="470"/>
        <end position="474"/>
    </location>
</feature>
<feature type="helix" evidence="6">
    <location>
        <begin position="476"/>
        <end position="482"/>
    </location>
</feature>
<feature type="strand" evidence="6">
    <location>
        <begin position="493"/>
        <end position="498"/>
    </location>
</feature>
<feature type="strand" evidence="6">
    <location>
        <begin position="500"/>
        <end position="509"/>
    </location>
</feature>
<feature type="strand" evidence="6">
    <location>
        <begin position="514"/>
        <end position="521"/>
    </location>
</feature>
<feature type="strand" evidence="6">
    <location>
        <begin position="526"/>
        <end position="528"/>
    </location>
</feature>
<feature type="strand" evidence="6">
    <location>
        <begin position="531"/>
        <end position="534"/>
    </location>
</feature>
<name>FIM1C_BACO1</name>
<reference evidence="5" key="1">
    <citation type="submission" date="2007-04" db="EMBL/GenBank/DDBJ databases">
        <title>Draft genome sequence of Bacteroides ovatus (ATCC 8483).</title>
        <authorList>
            <person name="Sudarsanam P."/>
            <person name="Ley R."/>
            <person name="Guruge J."/>
            <person name="Turnbaugh P.J."/>
            <person name="Mahowald M."/>
            <person name="Liep D."/>
            <person name="Gordon J."/>
        </authorList>
    </citation>
    <scope>NUCLEOTIDE SEQUENCE [LARGE SCALE GENOMIC DNA]</scope>
    <source>
        <strain>ATCC 8483 / DSM 1896 / JCM 5824 / BCRC 10623 / CCUG 4943 / NCTC 11153</strain>
    </source>
</reference>
<reference key="2">
    <citation type="journal article" date="2016" name="Cell">
        <title>A distinct type of pilus from the human microbiome.</title>
        <authorList>
            <person name="Xu Q."/>
            <person name="Shoji M."/>
            <person name="Shibata S."/>
            <person name="Naito M."/>
            <person name="Sato K."/>
            <person name="Elsliger M.A."/>
            <person name="Grant J.C."/>
            <person name="Axelrod H.L."/>
            <person name="Chiu H.J."/>
            <person name="Farr C.L."/>
            <person name="Jaroszewski L."/>
            <person name="Knuth M.W."/>
            <person name="Deacon A.M."/>
            <person name="Godzik A."/>
            <person name="Lesley S.A."/>
            <person name="Curtis M.A."/>
            <person name="Nakayama K."/>
            <person name="Wilson I.A."/>
        </authorList>
    </citation>
    <scope>X-RAY CRYSTALLOGRAPHY (1.85 ANGSTROMS) OF 26-534</scope>
    <scope>FUNCTION</scope>
    <scope>SUBUNIT</scope>
    <scope>SUBCELLULAR LOCATION</scope>
</reference>